<proteinExistence type="inferred from homology"/>
<reference key="1">
    <citation type="journal article" date="2002" name="J. Bacteriol.">
        <title>Whole-genome comparison of Mycobacterium tuberculosis clinical and laboratory strains.</title>
        <authorList>
            <person name="Fleischmann R.D."/>
            <person name="Alland D."/>
            <person name="Eisen J.A."/>
            <person name="Carpenter L."/>
            <person name="White O."/>
            <person name="Peterson J.D."/>
            <person name="DeBoy R.T."/>
            <person name="Dodson R.J."/>
            <person name="Gwinn M.L."/>
            <person name="Haft D.H."/>
            <person name="Hickey E.K."/>
            <person name="Kolonay J.F."/>
            <person name="Nelson W.C."/>
            <person name="Umayam L.A."/>
            <person name="Ermolaeva M.D."/>
            <person name="Salzberg S.L."/>
            <person name="Delcher A."/>
            <person name="Utterback T.R."/>
            <person name="Weidman J.F."/>
            <person name="Khouri H.M."/>
            <person name="Gill J."/>
            <person name="Mikula A."/>
            <person name="Bishai W."/>
            <person name="Jacobs W.R. Jr."/>
            <person name="Venter J.C."/>
            <person name="Fraser C.M."/>
        </authorList>
    </citation>
    <scope>NUCLEOTIDE SEQUENCE [LARGE SCALE GENOMIC DNA]</scope>
    <source>
        <strain>CDC 1551 / Oshkosh</strain>
    </source>
</reference>
<gene>
    <name type="ordered locus">MT0231</name>
</gene>
<organism>
    <name type="scientific">Mycobacterium tuberculosis (strain CDC 1551 / Oshkosh)</name>
    <dbReference type="NCBI Taxonomy" id="83331"/>
    <lineage>
        <taxon>Bacteria</taxon>
        <taxon>Bacillati</taxon>
        <taxon>Actinomycetota</taxon>
        <taxon>Actinomycetes</taxon>
        <taxon>Mycobacteriales</taxon>
        <taxon>Mycobacteriaceae</taxon>
        <taxon>Mycobacterium</taxon>
        <taxon>Mycobacterium tuberculosis complex</taxon>
    </lineage>
</organism>
<comment type="catalytic activity">
    <reaction evidence="1">
        <text>an acyl-CoA + a 1,2-diacyl-sn-glycerol = a triacyl-sn-glycerol + CoA</text>
        <dbReference type="Rhea" id="RHEA:10868"/>
        <dbReference type="ChEBI" id="CHEBI:17815"/>
        <dbReference type="ChEBI" id="CHEBI:57287"/>
        <dbReference type="ChEBI" id="CHEBI:58342"/>
        <dbReference type="ChEBI" id="CHEBI:64615"/>
        <dbReference type="EC" id="2.3.1.20"/>
    </reaction>
</comment>
<comment type="pathway">
    <text>Glycerolipid metabolism; triacylglycerol biosynthesis.</text>
</comment>
<comment type="similarity">
    <text evidence="3">Belongs to the long-chain O-acyltransferase family.</text>
</comment>
<comment type="sequence caution" evidence="3">
    <conflict type="erroneous initiation">
        <sequence resource="EMBL-CDS" id="AAK44452"/>
    </conflict>
    <text>Truncated N-terminus.</text>
</comment>
<name>Y221_MYCTO</name>
<protein>
    <recommendedName>
        <fullName>Putative diacyglycerol O-acyltransferase MT0231</fullName>
        <ecNumber evidence="1">2.3.1.20</ecNumber>
    </recommendedName>
    <alternativeName>
        <fullName>Putative triacylglycerol synthase MT0231</fullName>
    </alternativeName>
</protein>
<sequence>MKRLSGWDAVLLYSETPNVHMHTLKVAVIELDSDRQEFGVDAFREVIAGRLHKLEPLGYQLVDVPLKFHHPMWREHCQVDLNYHIRPWRLRAPGGRRELDEAVGEIASTPLNRDHPLWEMYFVEGLANHRIAVVAKIHHALADGVASANMMARGMDLLPGPEVGRYVPDPAPTKRQLLSAAFIDHLRHLGRIPATIRYTTQGLGRVRRSSRKLSPALTMPFTPPPTFMNHRLTPERRFATATLALIDVKATAKLLGATINDMVLAMSTGALRTLLLRYDGKAEPLLASVPVSYDFSPERISGNRFTGMLVALPADSDDPLQRVRVCHENAVSAKESHQLLGPELISRWAAYWPPAGAEALFRWLSERDGQNKVLNLNISNVPGPRERGRVGAALVTEIYSVGPLTAGSGLNITVWSYVDQLNISVLTDGSTVQDPHEVTAGMIADFIEIRRAAGLSVELTVVESAMAQA</sequence>
<evidence type="ECO:0000250" key="1">
    <source>
        <dbReference type="UniProtKB" id="P9WKC9"/>
    </source>
</evidence>
<evidence type="ECO:0000255" key="2"/>
<evidence type="ECO:0000305" key="3"/>
<feature type="chain" id="PRO_0000427682" description="Putative diacyglycerol O-acyltransferase MT0231">
    <location>
        <begin position="1"/>
        <end position="469"/>
    </location>
</feature>
<feature type="active site" description="Proton acceptor" evidence="2">
    <location>
        <position position="139"/>
    </location>
</feature>
<accession>P9WKB6</accession>
<accession>L0T2V6</accession>
<accession>P96403</accession>
<dbReference type="EC" id="2.3.1.20" evidence="1"/>
<dbReference type="EMBL" id="AE000516">
    <property type="protein sequence ID" value="AAK44452.1"/>
    <property type="status" value="ALT_INIT"/>
    <property type="molecule type" value="Genomic_DNA"/>
</dbReference>
<dbReference type="PIR" id="C70961">
    <property type="entry name" value="C70961"/>
</dbReference>
<dbReference type="RefSeq" id="WP_003900834.1">
    <property type="nucleotide sequence ID" value="NZ_KK341227.1"/>
</dbReference>
<dbReference type="SMR" id="P9WKB6"/>
<dbReference type="KEGG" id="mtc:MT0231"/>
<dbReference type="PATRIC" id="fig|83331.31.peg.251"/>
<dbReference type="HOGENOM" id="CLU_024186_4_2_11"/>
<dbReference type="UniPathway" id="UPA00282"/>
<dbReference type="Proteomes" id="UP000001020">
    <property type="component" value="Chromosome"/>
</dbReference>
<dbReference type="GO" id="GO:0005886">
    <property type="term" value="C:plasma membrane"/>
    <property type="evidence" value="ECO:0007669"/>
    <property type="project" value="TreeGrafter"/>
</dbReference>
<dbReference type="GO" id="GO:0004144">
    <property type="term" value="F:diacylglycerol O-acyltransferase activity"/>
    <property type="evidence" value="ECO:0007669"/>
    <property type="project" value="UniProtKB-EC"/>
</dbReference>
<dbReference type="GO" id="GO:0051701">
    <property type="term" value="P:biological process involved in interaction with host"/>
    <property type="evidence" value="ECO:0007669"/>
    <property type="project" value="TreeGrafter"/>
</dbReference>
<dbReference type="GO" id="GO:0006071">
    <property type="term" value="P:glycerol metabolic process"/>
    <property type="evidence" value="ECO:0007669"/>
    <property type="project" value="UniProtKB-KW"/>
</dbReference>
<dbReference type="GO" id="GO:0001666">
    <property type="term" value="P:response to hypoxia"/>
    <property type="evidence" value="ECO:0007669"/>
    <property type="project" value="TreeGrafter"/>
</dbReference>
<dbReference type="GO" id="GO:0071731">
    <property type="term" value="P:response to nitric oxide"/>
    <property type="evidence" value="ECO:0007669"/>
    <property type="project" value="TreeGrafter"/>
</dbReference>
<dbReference type="GO" id="GO:0019432">
    <property type="term" value="P:triglyceride biosynthetic process"/>
    <property type="evidence" value="ECO:0007669"/>
    <property type="project" value="UniProtKB-UniPathway"/>
</dbReference>
<dbReference type="InterPro" id="IPR014292">
    <property type="entry name" value="Acyl_transf_WS/DGAT"/>
</dbReference>
<dbReference type="InterPro" id="IPR045034">
    <property type="entry name" value="O-acyltransferase_WSD1-like"/>
</dbReference>
<dbReference type="InterPro" id="IPR009721">
    <property type="entry name" value="O-acyltransferase_WSD1_C"/>
</dbReference>
<dbReference type="InterPro" id="IPR004255">
    <property type="entry name" value="O-acyltransferase_WSD1_N"/>
</dbReference>
<dbReference type="NCBIfam" id="TIGR02946">
    <property type="entry name" value="acyl_WS_DGAT"/>
    <property type="match status" value="1"/>
</dbReference>
<dbReference type="PANTHER" id="PTHR31650">
    <property type="entry name" value="O-ACYLTRANSFERASE (WSD1-LIKE) FAMILY PROTEIN"/>
    <property type="match status" value="1"/>
</dbReference>
<dbReference type="PANTHER" id="PTHR31650:SF1">
    <property type="entry name" value="WAX ESTER SYNTHASE_DIACYLGLYCEROL ACYLTRANSFERASE 4-RELATED"/>
    <property type="match status" value="1"/>
</dbReference>
<dbReference type="Pfam" id="PF06974">
    <property type="entry name" value="WS_DGAT_C"/>
    <property type="match status" value="1"/>
</dbReference>
<dbReference type="Pfam" id="PF03007">
    <property type="entry name" value="WS_DGAT_cat"/>
    <property type="match status" value="1"/>
</dbReference>
<dbReference type="SUPFAM" id="SSF52777">
    <property type="entry name" value="CoA-dependent acyltransferases"/>
    <property type="match status" value="1"/>
</dbReference>
<keyword id="KW-0012">Acyltransferase</keyword>
<keyword id="KW-0319">Glycerol metabolism</keyword>
<keyword id="KW-0444">Lipid biosynthesis</keyword>
<keyword id="KW-0443">Lipid metabolism</keyword>
<keyword id="KW-1185">Reference proteome</keyword>
<keyword id="KW-0808">Transferase</keyword>